<organism>
    <name type="scientific">Shigella flexneri</name>
    <dbReference type="NCBI Taxonomy" id="623"/>
    <lineage>
        <taxon>Bacteria</taxon>
        <taxon>Pseudomonadati</taxon>
        <taxon>Pseudomonadota</taxon>
        <taxon>Gammaproteobacteria</taxon>
        <taxon>Enterobacterales</taxon>
        <taxon>Enterobacteriaceae</taxon>
        <taxon>Shigella</taxon>
    </lineage>
</organism>
<sequence length="471" mass="52390">MAGNKPFNKQQAEPRERDPQVAGLKVPPHSIEAEQSVLGGLMLDNERWDDVAERVVADDFYTRPHRHIFTEMARLQESGSPIDLITLAESLERQGQLDSVGGFAYLAELSKNTPSAANISAYADIVRERAVVREMISVANEIAEAGFDPQGRTSEDLLDLAESRVFKIAESRANKDEGPKNIADVLDATVARIEQLFQQPHDGVTGVNTGYDDLNKKTAGLQPSDLIIVAARPSMGKTTFAMNLVENAAMLQDKPVLIFSLEMPSEQIMMRSLASLSRVDQTKIRTGQLDDEDWARISGTMGILLEKRNIYIDDSSGLTPTEVRSRARRIAREHGGIGLIMIDYLQLMRVPALSDNRTLEIAEISRSLKALAKELNVPVVALSQLNRSLEQRADKRPVNSDLRESGSIEQDADLIMFIYRDEVYHENSDLKGIAEIIIGKQRNGPIGTVRLTFNGQWSRFDNYAGPQYDDE</sequence>
<gene>
    <name type="primary">dnaB</name>
    <name type="ordered locus">SF4154</name>
    <name type="ordered locus">S3577</name>
</gene>
<name>DNAB_SHIFL</name>
<protein>
    <recommendedName>
        <fullName>Replicative DNA helicase DnaB</fullName>
        <ecNumber evidence="1">5.6.2.3</ecNumber>
    </recommendedName>
    <alternativeName>
        <fullName evidence="4">DNA 5'-3' helicase DnaB</fullName>
    </alternativeName>
</protein>
<accession>P0ACB1</accession>
<accession>P03005</accession>
<keyword id="KW-0067">ATP-binding</keyword>
<keyword id="KW-0235">DNA replication</keyword>
<keyword id="KW-0238">DNA-binding</keyword>
<keyword id="KW-0347">Helicase</keyword>
<keyword id="KW-0378">Hydrolase</keyword>
<keyword id="KW-0413">Isomerase</keyword>
<keyword id="KW-0547">Nucleotide-binding</keyword>
<keyword id="KW-0639">Primosome</keyword>
<keyword id="KW-1185">Reference proteome</keyword>
<reference key="1">
    <citation type="journal article" date="2002" name="Nucleic Acids Res.">
        <title>Genome sequence of Shigella flexneri 2a: insights into pathogenicity through comparison with genomes of Escherichia coli K12 and O157.</title>
        <authorList>
            <person name="Jin Q."/>
            <person name="Yuan Z."/>
            <person name="Xu J."/>
            <person name="Wang Y."/>
            <person name="Shen Y."/>
            <person name="Lu W."/>
            <person name="Wang J."/>
            <person name="Liu H."/>
            <person name="Yang J."/>
            <person name="Yang F."/>
            <person name="Zhang X."/>
            <person name="Zhang J."/>
            <person name="Yang G."/>
            <person name="Wu H."/>
            <person name="Qu D."/>
            <person name="Dong J."/>
            <person name="Sun L."/>
            <person name="Xue Y."/>
            <person name="Zhao A."/>
            <person name="Gao Y."/>
            <person name="Zhu J."/>
            <person name="Kan B."/>
            <person name="Ding K."/>
            <person name="Chen S."/>
            <person name="Cheng H."/>
            <person name="Yao Z."/>
            <person name="He B."/>
            <person name="Chen R."/>
            <person name="Ma D."/>
            <person name="Qiang B."/>
            <person name="Wen Y."/>
            <person name="Hou Y."/>
            <person name="Yu J."/>
        </authorList>
    </citation>
    <scope>NUCLEOTIDE SEQUENCE [LARGE SCALE GENOMIC DNA]</scope>
    <source>
        <strain>301 / Serotype 2a</strain>
    </source>
</reference>
<reference key="2">
    <citation type="journal article" date="2003" name="Infect. Immun.">
        <title>Complete genome sequence and comparative genomics of Shigella flexneri serotype 2a strain 2457T.</title>
        <authorList>
            <person name="Wei J."/>
            <person name="Goldberg M.B."/>
            <person name="Burland V."/>
            <person name="Venkatesan M.M."/>
            <person name="Deng W."/>
            <person name="Fournier G."/>
            <person name="Mayhew G.F."/>
            <person name="Plunkett G. III"/>
            <person name="Rose D.J."/>
            <person name="Darling A."/>
            <person name="Mau B."/>
            <person name="Perna N.T."/>
            <person name="Payne S.M."/>
            <person name="Runyen-Janecky L.J."/>
            <person name="Zhou S."/>
            <person name="Schwartz D.C."/>
            <person name="Blattner F.R."/>
        </authorList>
    </citation>
    <scope>NUCLEOTIDE SEQUENCE [LARGE SCALE GENOMIC DNA]</scope>
    <source>
        <strain>ATCC 700930 / 2457T / Serotype 2a</strain>
    </source>
</reference>
<dbReference type="EC" id="5.6.2.3" evidence="1"/>
<dbReference type="EMBL" id="AE005674">
    <property type="protein sequence ID" value="AAN45575.1"/>
    <property type="molecule type" value="Genomic_DNA"/>
</dbReference>
<dbReference type="EMBL" id="AE014073">
    <property type="protein sequence ID" value="AAP18623.1"/>
    <property type="molecule type" value="Genomic_DNA"/>
</dbReference>
<dbReference type="RefSeq" id="NP_709868.1">
    <property type="nucleotide sequence ID" value="NC_004337.2"/>
</dbReference>
<dbReference type="RefSeq" id="WP_000918363.1">
    <property type="nucleotide sequence ID" value="NZ_WPGW01000163.1"/>
</dbReference>
<dbReference type="BMRB" id="P0ACB1"/>
<dbReference type="SMR" id="P0ACB1"/>
<dbReference type="STRING" id="198214.SF4154"/>
<dbReference type="PaxDb" id="198214-SF4154"/>
<dbReference type="GeneID" id="1025050"/>
<dbReference type="GeneID" id="93777780"/>
<dbReference type="KEGG" id="sfl:SF4154"/>
<dbReference type="KEGG" id="sfx:S3577"/>
<dbReference type="PATRIC" id="fig|198214.7.peg.4900"/>
<dbReference type="HOGENOM" id="CLU_005373_0_0_6"/>
<dbReference type="Proteomes" id="UP000001006">
    <property type="component" value="Chromosome"/>
</dbReference>
<dbReference type="Proteomes" id="UP000002673">
    <property type="component" value="Chromosome"/>
</dbReference>
<dbReference type="GO" id="GO:0005829">
    <property type="term" value="C:cytosol"/>
    <property type="evidence" value="ECO:0007669"/>
    <property type="project" value="TreeGrafter"/>
</dbReference>
<dbReference type="GO" id="GO:1990077">
    <property type="term" value="C:primosome complex"/>
    <property type="evidence" value="ECO:0007669"/>
    <property type="project" value="UniProtKB-KW"/>
</dbReference>
<dbReference type="GO" id="GO:0005524">
    <property type="term" value="F:ATP binding"/>
    <property type="evidence" value="ECO:0007669"/>
    <property type="project" value="UniProtKB-KW"/>
</dbReference>
<dbReference type="GO" id="GO:0016887">
    <property type="term" value="F:ATP hydrolysis activity"/>
    <property type="evidence" value="ECO:0007669"/>
    <property type="project" value="InterPro"/>
</dbReference>
<dbReference type="GO" id="GO:0003677">
    <property type="term" value="F:DNA binding"/>
    <property type="evidence" value="ECO:0007669"/>
    <property type="project" value="UniProtKB-KW"/>
</dbReference>
<dbReference type="GO" id="GO:0003678">
    <property type="term" value="F:DNA helicase activity"/>
    <property type="evidence" value="ECO:0007669"/>
    <property type="project" value="InterPro"/>
</dbReference>
<dbReference type="GO" id="GO:0006269">
    <property type="term" value="P:DNA replication, synthesis of primer"/>
    <property type="evidence" value="ECO:0007669"/>
    <property type="project" value="UniProtKB-KW"/>
</dbReference>
<dbReference type="CDD" id="cd00984">
    <property type="entry name" value="DnaB_C"/>
    <property type="match status" value="1"/>
</dbReference>
<dbReference type="FunFam" id="1.10.860.10:FF:000002">
    <property type="entry name" value="Replicative DNA helicase"/>
    <property type="match status" value="1"/>
</dbReference>
<dbReference type="FunFam" id="3.40.50.300:FF:000076">
    <property type="entry name" value="Replicative DNA helicase"/>
    <property type="match status" value="1"/>
</dbReference>
<dbReference type="Gene3D" id="1.10.860.10">
    <property type="entry name" value="DNAb Helicase, Chain A"/>
    <property type="match status" value="1"/>
</dbReference>
<dbReference type="Gene3D" id="3.40.50.300">
    <property type="entry name" value="P-loop containing nucleotide triphosphate hydrolases"/>
    <property type="match status" value="1"/>
</dbReference>
<dbReference type="InterPro" id="IPR003593">
    <property type="entry name" value="AAA+_ATPase"/>
</dbReference>
<dbReference type="InterPro" id="IPR036185">
    <property type="entry name" value="DNA_heli_DnaB-like_N_sf"/>
</dbReference>
<dbReference type="InterPro" id="IPR007692">
    <property type="entry name" value="DNA_helicase_DnaB"/>
</dbReference>
<dbReference type="InterPro" id="IPR007694">
    <property type="entry name" value="DNA_helicase_DnaB-like_C"/>
</dbReference>
<dbReference type="InterPro" id="IPR007693">
    <property type="entry name" value="DNA_helicase_DnaB-like_N"/>
</dbReference>
<dbReference type="InterPro" id="IPR016136">
    <property type="entry name" value="DNA_helicase_N/primase_C"/>
</dbReference>
<dbReference type="InterPro" id="IPR027417">
    <property type="entry name" value="P-loop_NTPase"/>
</dbReference>
<dbReference type="NCBIfam" id="TIGR00665">
    <property type="entry name" value="DnaB"/>
    <property type="match status" value="1"/>
</dbReference>
<dbReference type="NCBIfam" id="NF004384">
    <property type="entry name" value="PRK05748.1"/>
    <property type="match status" value="1"/>
</dbReference>
<dbReference type="NCBIfam" id="NF005945">
    <property type="entry name" value="PRK08006.1"/>
    <property type="match status" value="1"/>
</dbReference>
<dbReference type="NCBIfam" id="NF006458">
    <property type="entry name" value="PRK08840.1"/>
    <property type="match status" value="1"/>
</dbReference>
<dbReference type="PANTHER" id="PTHR30153:SF2">
    <property type="entry name" value="REPLICATIVE DNA HELICASE"/>
    <property type="match status" value="1"/>
</dbReference>
<dbReference type="PANTHER" id="PTHR30153">
    <property type="entry name" value="REPLICATIVE DNA HELICASE DNAB"/>
    <property type="match status" value="1"/>
</dbReference>
<dbReference type="Pfam" id="PF00772">
    <property type="entry name" value="DnaB"/>
    <property type="match status" value="1"/>
</dbReference>
<dbReference type="Pfam" id="PF03796">
    <property type="entry name" value="DnaB_C"/>
    <property type="match status" value="1"/>
</dbReference>
<dbReference type="SMART" id="SM00382">
    <property type="entry name" value="AAA"/>
    <property type="match status" value="1"/>
</dbReference>
<dbReference type="SUPFAM" id="SSF48024">
    <property type="entry name" value="N-terminal domain of DnaB helicase"/>
    <property type="match status" value="1"/>
</dbReference>
<dbReference type="SUPFAM" id="SSF52540">
    <property type="entry name" value="P-loop containing nucleoside triphosphate hydrolases"/>
    <property type="match status" value="1"/>
</dbReference>
<dbReference type="PROSITE" id="PS51199">
    <property type="entry name" value="SF4_HELICASE"/>
    <property type="match status" value="1"/>
</dbReference>
<feature type="chain" id="PRO_0000102032" description="Replicative DNA helicase DnaB">
    <location>
        <begin position="1"/>
        <end position="471"/>
    </location>
</feature>
<feature type="domain" description="SF4 helicase" evidence="2">
    <location>
        <begin position="200"/>
        <end position="467"/>
    </location>
</feature>
<feature type="region of interest" description="Disordered" evidence="3">
    <location>
        <begin position="1"/>
        <end position="27"/>
    </location>
</feature>
<feature type="binding site" evidence="2">
    <location>
        <begin position="231"/>
        <end position="238"/>
    </location>
    <ligand>
        <name>ATP</name>
        <dbReference type="ChEBI" id="CHEBI:30616"/>
    </ligand>
</feature>
<comment type="function">
    <text evidence="1">The main replicative DNA helicase, it participates in initiation and elongation during chromosome replication. Travels ahead of the DNA replisome, separating dsDNA into templates for DNA synthesis. A processive ATP-dependent 5'-3' DNA helicase it has DNA-dependent ATPase activity.</text>
</comment>
<comment type="catalytic activity">
    <reaction evidence="1">
        <text>Couples ATP hydrolysis with the unwinding of duplex DNA at the replication fork by translocating in the 5'-3' direction. This creates two antiparallel DNA single strands (ssDNA). The leading ssDNA polymer is the template for DNA polymerase III holoenzyme which synthesizes a continuous strand.</text>
        <dbReference type="EC" id="5.6.2.3"/>
    </reaction>
</comment>
<comment type="catalytic activity">
    <reaction evidence="1">
        <text>ATP + H2O = ADP + phosphate + H(+)</text>
        <dbReference type="Rhea" id="RHEA:13065"/>
        <dbReference type="ChEBI" id="CHEBI:15377"/>
        <dbReference type="ChEBI" id="CHEBI:15378"/>
        <dbReference type="ChEBI" id="CHEBI:30616"/>
        <dbReference type="ChEBI" id="CHEBI:43474"/>
        <dbReference type="ChEBI" id="CHEBI:456216"/>
        <dbReference type="EC" id="5.6.2.3"/>
    </reaction>
</comment>
<comment type="subunit">
    <text evidence="1">Homohexamer.</text>
</comment>
<comment type="similarity">
    <text evidence="4">Belongs to the helicase family. DnaB subfamily.</text>
</comment>
<proteinExistence type="inferred from homology"/>
<evidence type="ECO:0000250" key="1">
    <source>
        <dbReference type="UniProtKB" id="P0ACB0"/>
    </source>
</evidence>
<evidence type="ECO:0000255" key="2">
    <source>
        <dbReference type="PROSITE-ProRule" id="PRU00596"/>
    </source>
</evidence>
<evidence type="ECO:0000256" key="3">
    <source>
        <dbReference type="SAM" id="MobiDB-lite"/>
    </source>
</evidence>
<evidence type="ECO:0000305" key="4"/>